<gene>
    <name evidence="1" type="primary">coaX</name>
    <name type="ordered locus">ROP_43330</name>
</gene>
<name>COAX_RHOOB</name>
<protein>
    <recommendedName>
        <fullName evidence="1">Type III pantothenate kinase</fullName>
        <ecNumber evidence="1">2.7.1.33</ecNumber>
    </recommendedName>
    <alternativeName>
        <fullName evidence="1">PanK-III</fullName>
    </alternativeName>
    <alternativeName>
        <fullName evidence="1">Pantothenic acid kinase</fullName>
    </alternativeName>
</protein>
<evidence type="ECO:0000255" key="1">
    <source>
        <dbReference type="HAMAP-Rule" id="MF_01274"/>
    </source>
</evidence>
<comment type="function">
    <text evidence="1">Catalyzes the phosphorylation of pantothenate (Pan), the first step in CoA biosynthesis.</text>
</comment>
<comment type="catalytic activity">
    <reaction evidence="1">
        <text>(R)-pantothenate + ATP = (R)-4'-phosphopantothenate + ADP + H(+)</text>
        <dbReference type="Rhea" id="RHEA:16373"/>
        <dbReference type="ChEBI" id="CHEBI:10986"/>
        <dbReference type="ChEBI" id="CHEBI:15378"/>
        <dbReference type="ChEBI" id="CHEBI:29032"/>
        <dbReference type="ChEBI" id="CHEBI:30616"/>
        <dbReference type="ChEBI" id="CHEBI:456216"/>
        <dbReference type="EC" id="2.7.1.33"/>
    </reaction>
</comment>
<comment type="cofactor">
    <cofactor evidence="1">
        <name>NH4(+)</name>
        <dbReference type="ChEBI" id="CHEBI:28938"/>
    </cofactor>
    <cofactor evidence="1">
        <name>K(+)</name>
        <dbReference type="ChEBI" id="CHEBI:29103"/>
    </cofactor>
    <text evidence="1">A monovalent cation. Ammonium or potassium.</text>
</comment>
<comment type="pathway">
    <text evidence="1">Cofactor biosynthesis; coenzyme A biosynthesis; CoA from (R)-pantothenate: step 1/5.</text>
</comment>
<comment type="subunit">
    <text evidence="1">Homodimer.</text>
</comment>
<comment type="subcellular location">
    <subcellularLocation>
        <location evidence="1">Cytoplasm</location>
    </subcellularLocation>
</comment>
<comment type="similarity">
    <text evidence="1">Belongs to the type III pantothenate kinase family.</text>
</comment>
<dbReference type="EC" id="2.7.1.33" evidence="1"/>
<dbReference type="EMBL" id="AP011115">
    <property type="protein sequence ID" value="BAH52580.1"/>
    <property type="molecule type" value="Genomic_DNA"/>
</dbReference>
<dbReference type="RefSeq" id="WP_012691508.1">
    <property type="nucleotide sequence ID" value="NC_012522.1"/>
</dbReference>
<dbReference type="SMR" id="C1BA77"/>
<dbReference type="STRING" id="632772.ROP_43330"/>
<dbReference type="KEGG" id="rop:ROP_43330"/>
<dbReference type="PATRIC" id="fig|632772.20.peg.4538"/>
<dbReference type="HOGENOM" id="CLU_066627_1_0_11"/>
<dbReference type="OrthoDB" id="9804707at2"/>
<dbReference type="UniPathway" id="UPA00241">
    <property type="reaction ID" value="UER00352"/>
</dbReference>
<dbReference type="Proteomes" id="UP000002212">
    <property type="component" value="Chromosome"/>
</dbReference>
<dbReference type="GO" id="GO:0005737">
    <property type="term" value="C:cytoplasm"/>
    <property type="evidence" value="ECO:0007669"/>
    <property type="project" value="UniProtKB-SubCell"/>
</dbReference>
<dbReference type="GO" id="GO:0005524">
    <property type="term" value="F:ATP binding"/>
    <property type="evidence" value="ECO:0007669"/>
    <property type="project" value="UniProtKB-UniRule"/>
</dbReference>
<dbReference type="GO" id="GO:0046872">
    <property type="term" value="F:metal ion binding"/>
    <property type="evidence" value="ECO:0007669"/>
    <property type="project" value="UniProtKB-KW"/>
</dbReference>
<dbReference type="GO" id="GO:0004594">
    <property type="term" value="F:pantothenate kinase activity"/>
    <property type="evidence" value="ECO:0007669"/>
    <property type="project" value="UniProtKB-UniRule"/>
</dbReference>
<dbReference type="GO" id="GO:0015937">
    <property type="term" value="P:coenzyme A biosynthetic process"/>
    <property type="evidence" value="ECO:0007669"/>
    <property type="project" value="UniProtKB-UniRule"/>
</dbReference>
<dbReference type="CDD" id="cd24015">
    <property type="entry name" value="ASKHA_NBD_PanK-III"/>
    <property type="match status" value="1"/>
</dbReference>
<dbReference type="Gene3D" id="3.30.420.40">
    <property type="match status" value="2"/>
</dbReference>
<dbReference type="HAMAP" id="MF_01274">
    <property type="entry name" value="Pantothen_kinase_3"/>
    <property type="match status" value="1"/>
</dbReference>
<dbReference type="InterPro" id="IPR043129">
    <property type="entry name" value="ATPase_NBD"/>
</dbReference>
<dbReference type="InterPro" id="IPR004619">
    <property type="entry name" value="Type_III_PanK"/>
</dbReference>
<dbReference type="NCBIfam" id="TIGR00671">
    <property type="entry name" value="baf"/>
    <property type="match status" value="1"/>
</dbReference>
<dbReference type="NCBIfam" id="NF009845">
    <property type="entry name" value="PRK13318.1-3"/>
    <property type="match status" value="1"/>
</dbReference>
<dbReference type="NCBIfam" id="NF009855">
    <property type="entry name" value="PRK13321.1"/>
    <property type="match status" value="1"/>
</dbReference>
<dbReference type="PANTHER" id="PTHR34265">
    <property type="entry name" value="TYPE III PANTOTHENATE KINASE"/>
    <property type="match status" value="1"/>
</dbReference>
<dbReference type="PANTHER" id="PTHR34265:SF1">
    <property type="entry name" value="TYPE III PANTOTHENATE KINASE"/>
    <property type="match status" value="1"/>
</dbReference>
<dbReference type="Pfam" id="PF03309">
    <property type="entry name" value="Pan_kinase"/>
    <property type="match status" value="1"/>
</dbReference>
<dbReference type="SUPFAM" id="SSF53067">
    <property type="entry name" value="Actin-like ATPase domain"/>
    <property type="match status" value="2"/>
</dbReference>
<reference key="1">
    <citation type="submission" date="2009-03" db="EMBL/GenBank/DDBJ databases">
        <title>Comparison of the complete genome sequences of Rhodococcus erythropolis PR4 and Rhodococcus opacus B4.</title>
        <authorList>
            <person name="Takarada H."/>
            <person name="Sekine M."/>
            <person name="Hosoyama A."/>
            <person name="Yamada R."/>
            <person name="Fujisawa T."/>
            <person name="Omata S."/>
            <person name="Shimizu A."/>
            <person name="Tsukatani N."/>
            <person name="Tanikawa S."/>
            <person name="Fujita N."/>
            <person name="Harayama S."/>
        </authorList>
    </citation>
    <scope>NUCLEOTIDE SEQUENCE [LARGE SCALE GENOMIC DNA]</scope>
    <source>
        <strain>B4</strain>
    </source>
</reference>
<organism>
    <name type="scientific">Rhodococcus opacus (strain B4)</name>
    <dbReference type="NCBI Taxonomy" id="632772"/>
    <lineage>
        <taxon>Bacteria</taxon>
        <taxon>Bacillati</taxon>
        <taxon>Actinomycetota</taxon>
        <taxon>Actinomycetes</taxon>
        <taxon>Mycobacteriales</taxon>
        <taxon>Nocardiaceae</taxon>
        <taxon>Rhodococcus</taxon>
    </lineage>
</organism>
<feature type="chain" id="PRO_1000165205" description="Type III pantothenate kinase">
    <location>
        <begin position="1"/>
        <end position="271"/>
    </location>
</feature>
<feature type="active site" description="Proton acceptor" evidence="1">
    <location>
        <position position="111"/>
    </location>
</feature>
<feature type="binding site" evidence="1">
    <location>
        <begin position="6"/>
        <end position="13"/>
    </location>
    <ligand>
        <name>ATP</name>
        <dbReference type="ChEBI" id="CHEBI:30616"/>
    </ligand>
</feature>
<feature type="binding site" evidence="1">
    <location>
        <begin position="109"/>
        <end position="112"/>
    </location>
    <ligand>
        <name>substrate</name>
    </ligand>
</feature>
<feature type="binding site" evidence="1">
    <location>
        <position position="131"/>
    </location>
    <ligand>
        <name>K(+)</name>
        <dbReference type="ChEBI" id="CHEBI:29103"/>
    </ligand>
</feature>
<feature type="binding site" evidence="1">
    <location>
        <position position="134"/>
    </location>
    <ligand>
        <name>ATP</name>
        <dbReference type="ChEBI" id="CHEBI:30616"/>
    </ligand>
</feature>
<feature type="binding site" evidence="1">
    <location>
        <position position="186"/>
    </location>
    <ligand>
        <name>substrate</name>
    </ligand>
</feature>
<keyword id="KW-0067">ATP-binding</keyword>
<keyword id="KW-0173">Coenzyme A biosynthesis</keyword>
<keyword id="KW-0963">Cytoplasm</keyword>
<keyword id="KW-0418">Kinase</keyword>
<keyword id="KW-0479">Metal-binding</keyword>
<keyword id="KW-0547">Nucleotide-binding</keyword>
<keyword id="KW-0630">Potassium</keyword>
<keyword id="KW-0808">Transferase</keyword>
<accession>C1BA77</accession>
<sequence>MLLTVDVRNTNIVLGLFTGTGEHSKLVQDWRMRTDARMTADELALIFRGLLGAHTDQITGVSALSTVPSVLREIRVMLTRYWGHVPHVLVEPGVRTGVPLLVDNPKEVGADRIVNSLAAHHLYDAPCIVVDFGTSTCVDVVSAKGEFLGGAIAPGLEISSDALASQSAALRKVELVRPRSVVGKNTVECMQSGAVFGFAGLVDGLVRRVRRELPAFSGSDVVVIATGDRAPLIMPETETVDEHEPDLTLEGLRLVYERNQARRGARRSPLD</sequence>
<proteinExistence type="inferred from homology"/>